<organism>
    <name type="scientific">Homo sapiens</name>
    <name type="common">Human</name>
    <dbReference type="NCBI Taxonomy" id="9606"/>
    <lineage>
        <taxon>Eukaryota</taxon>
        <taxon>Metazoa</taxon>
        <taxon>Chordata</taxon>
        <taxon>Craniata</taxon>
        <taxon>Vertebrata</taxon>
        <taxon>Euteleostomi</taxon>
        <taxon>Mammalia</taxon>
        <taxon>Eutheria</taxon>
        <taxon>Euarchontoglires</taxon>
        <taxon>Primates</taxon>
        <taxon>Haplorrhini</taxon>
        <taxon>Catarrhini</taxon>
        <taxon>Hominidae</taxon>
        <taxon>Homo</taxon>
    </lineage>
</organism>
<protein>
    <recommendedName>
        <fullName>Ankyrin repeat domain-containing protein 7</fullName>
    </recommendedName>
    <alternativeName>
        <fullName>Testis-specific protein TSA806</fullName>
    </alternativeName>
</protein>
<sequence>MNKLFSFWKRKNETRSQGYNLREKDLKKLHRAASVGDLKKLKEYLQIKKYDVNMQDKKYRTPLHLACANGHTDVVLFLIEQQCKINVRDSENKSPLIKAVQCQNEDCATILLNFGADPDLRDIRYNTVLHYAVCGQSLSLVEKLLEYEADLEAKNKDGYTPLLVAVINNNPKMVKFLLEKGADVNASDNYQRTALILAVSGEPPCLVKLLLQQGVELCYEGIVDSQLRNMFISMVLLHRYPQFTASHGKKKHAK</sequence>
<gene>
    <name type="primary">ANKRD7</name>
</gene>
<name>ANKR7_HUMAN</name>
<evidence type="ECO:0000305" key="1"/>
<proteinExistence type="evidence at protein level"/>
<comment type="alternative products">
    <event type="alternative splicing"/>
    <isoform>
        <id>Q92527-1</id>
        <name>1</name>
        <sequence type="displayed"/>
    </isoform>
    <isoform>
        <id>Q92527-2</id>
        <name>2</name>
        <sequence type="described" ref="VSP_037160"/>
    </isoform>
</comment>
<comment type="tissue specificity">
    <text>Testis specific.</text>
</comment>
<comment type="sequence caution" evidence="1">
    <conflict type="erroneous initiation">
        <sequence resource="EMBL-CDS" id="AAH32799"/>
    </conflict>
    <text>Truncated N-terminus.</text>
</comment>
<feature type="chain" id="PRO_0000066902" description="Ankyrin repeat domain-containing protein 7">
    <location>
        <begin position="1"/>
        <end position="254"/>
    </location>
</feature>
<feature type="repeat" description="ANK 1">
    <location>
        <begin position="58"/>
        <end position="87"/>
    </location>
</feature>
<feature type="repeat" description="ANK 2">
    <location>
        <begin position="91"/>
        <end position="120"/>
    </location>
</feature>
<feature type="repeat" description="ANK 3">
    <location>
        <begin position="124"/>
        <end position="153"/>
    </location>
</feature>
<feature type="repeat" description="ANK 4">
    <location>
        <begin position="157"/>
        <end position="186"/>
    </location>
</feature>
<feature type="repeat" description="ANK 5">
    <location>
        <begin position="190"/>
        <end position="219"/>
    </location>
</feature>
<feature type="splice variant" id="VSP_037160" description="In isoform 2." evidence="1">
    <original>Y</original>
    <variation>YSVVQSSRWLLSYTTPLNDFI</variation>
    <location>
        <position position="59"/>
    </location>
</feature>
<feature type="sequence conflict" description="In Ref. 4; BAA11348." evidence="1" ref="4">
    <original>NEDCA</original>
    <variation>MRIVP</variation>
    <location>
        <begin position="104"/>
        <end position="108"/>
    </location>
</feature>
<dbReference type="EMBL" id="AK302407">
    <property type="protein sequence ID" value="BAG63717.1"/>
    <property type="molecule type" value="mRNA"/>
</dbReference>
<dbReference type="EMBL" id="AC004029">
    <property type="status" value="NOT_ANNOTATED_CDS"/>
    <property type="molecule type" value="Genomic_DNA"/>
</dbReference>
<dbReference type="EMBL" id="AC006389">
    <property type="status" value="NOT_ANNOTATED_CDS"/>
    <property type="molecule type" value="Genomic_DNA"/>
</dbReference>
<dbReference type="EMBL" id="AC007874">
    <property type="protein sequence ID" value="AAF19231.1"/>
    <property type="molecule type" value="Genomic_DNA"/>
</dbReference>
<dbReference type="EMBL" id="BC032799">
    <property type="protein sequence ID" value="AAH32799.1"/>
    <property type="status" value="ALT_INIT"/>
    <property type="molecule type" value="mRNA"/>
</dbReference>
<dbReference type="EMBL" id="BC007020">
    <property type="protein sequence ID" value="AAH07020.2"/>
    <property type="molecule type" value="mRNA"/>
</dbReference>
<dbReference type="EMBL" id="D78334">
    <property type="protein sequence ID" value="BAA11348.1"/>
    <property type="molecule type" value="mRNA"/>
</dbReference>
<dbReference type="CCDS" id="CCDS43638.1">
    <molecule id="Q92527-1"/>
</dbReference>
<dbReference type="RefSeq" id="NP_062618.2">
    <molecule id="Q92527-1"/>
    <property type="nucleotide sequence ID" value="NM_019644.4"/>
</dbReference>
<dbReference type="SMR" id="Q92527"/>
<dbReference type="BioGRID" id="121138">
    <property type="interactions" value="2"/>
</dbReference>
<dbReference type="FunCoup" id="Q92527">
    <property type="interactions" value="7"/>
</dbReference>
<dbReference type="IntAct" id="Q92527">
    <property type="interactions" value="3"/>
</dbReference>
<dbReference type="MINT" id="Q92527"/>
<dbReference type="STRING" id="9606.ENSP00000265224"/>
<dbReference type="iPTMnet" id="Q92527"/>
<dbReference type="PhosphoSitePlus" id="Q92527"/>
<dbReference type="BioMuta" id="ANKRD7"/>
<dbReference type="DMDM" id="229462988"/>
<dbReference type="MassIVE" id="Q92527"/>
<dbReference type="PaxDb" id="9606-ENSP00000349612"/>
<dbReference type="PeptideAtlas" id="Q92527"/>
<dbReference type="ProteomicsDB" id="75287">
    <molecule id="Q92527-1"/>
</dbReference>
<dbReference type="ProteomicsDB" id="75288">
    <molecule id="Q92527-2"/>
</dbReference>
<dbReference type="Antibodypedia" id="31679">
    <property type="antibodies" value="84 antibodies from 22 providers"/>
</dbReference>
<dbReference type="DNASU" id="56311"/>
<dbReference type="Ensembl" id="ENST00000265224.9">
    <molecule id="Q92527-1"/>
    <property type="protein sequence ID" value="ENSP00000265224.4"/>
    <property type="gene ID" value="ENSG00000106013.15"/>
</dbReference>
<dbReference type="GeneID" id="56311"/>
<dbReference type="KEGG" id="hsa:56311"/>
<dbReference type="MANE-Select" id="ENST00000265224.9">
    <property type="protein sequence ID" value="ENSP00000265224.4"/>
    <property type="RefSeq nucleotide sequence ID" value="NM_019644.4"/>
    <property type="RefSeq protein sequence ID" value="NP_062618.2"/>
</dbReference>
<dbReference type="UCSC" id="uc003vji.4">
    <molecule id="Q92527-1"/>
    <property type="organism name" value="human"/>
</dbReference>
<dbReference type="AGR" id="HGNC:18588"/>
<dbReference type="CTD" id="56311"/>
<dbReference type="DisGeNET" id="56311"/>
<dbReference type="GeneCards" id="ANKRD7"/>
<dbReference type="HGNC" id="HGNC:18588">
    <property type="gene designation" value="ANKRD7"/>
</dbReference>
<dbReference type="HPA" id="ENSG00000106013">
    <property type="expression patterns" value="Tissue enriched (testis)"/>
</dbReference>
<dbReference type="MIM" id="610731">
    <property type="type" value="gene"/>
</dbReference>
<dbReference type="neXtProt" id="NX_Q92527"/>
<dbReference type="OpenTargets" id="ENSG00000106013"/>
<dbReference type="PharmGKB" id="PA38591"/>
<dbReference type="VEuPathDB" id="HostDB:ENSG00000106013"/>
<dbReference type="eggNOG" id="KOG0504">
    <property type="taxonomic scope" value="Eukaryota"/>
</dbReference>
<dbReference type="GeneTree" id="ENSGT00940000164704"/>
<dbReference type="HOGENOM" id="CLU_000134_9_1_1"/>
<dbReference type="InParanoid" id="Q92527"/>
<dbReference type="OMA" id="HSCCLLI"/>
<dbReference type="OrthoDB" id="366390at2759"/>
<dbReference type="PAN-GO" id="Q92527">
    <property type="GO annotations" value="0 GO annotations based on evolutionary models"/>
</dbReference>
<dbReference type="PhylomeDB" id="Q92527"/>
<dbReference type="TreeFam" id="TF337879"/>
<dbReference type="PathwayCommons" id="Q92527"/>
<dbReference type="SignaLink" id="Q92527"/>
<dbReference type="BioGRID-ORCS" id="56311">
    <property type="hits" value="12 hits in 1144 CRISPR screens"/>
</dbReference>
<dbReference type="ChiTaRS" id="ANKRD7">
    <property type="organism name" value="human"/>
</dbReference>
<dbReference type="GenomeRNAi" id="56311"/>
<dbReference type="Pharos" id="Q92527">
    <property type="development level" value="Tdark"/>
</dbReference>
<dbReference type="PRO" id="PR:Q92527"/>
<dbReference type="Proteomes" id="UP000005640">
    <property type="component" value="Chromosome 7"/>
</dbReference>
<dbReference type="RNAct" id="Q92527">
    <property type="molecule type" value="protein"/>
</dbReference>
<dbReference type="Bgee" id="ENSG00000106013">
    <property type="expression patterns" value="Expressed in left testis and 104 other cell types or tissues"/>
</dbReference>
<dbReference type="ExpressionAtlas" id="Q92527">
    <property type="expression patterns" value="baseline and differential"/>
</dbReference>
<dbReference type="GO" id="GO:0005813">
    <property type="term" value="C:centrosome"/>
    <property type="evidence" value="ECO:0000314"/>
    <property type="project" value="HPA"/>
</dbReference>
<dbReference type="GO" id="GO:0005654">
    <property type="term" value="C:nucleoplasm"/>
    <property type="evidence" value="ECO:0000314"/>
    <property type="project" value="HPA"/>
</dbReference>
<dbReference type="Gene3D" id="1.25.40.20">
    <property type="entry name" value="Ankyrin repeat-containing domain"/>
    <property type="match status" value="2"/>
</dbReference>
<dbReference type="InterPro" id="IPR050657">
    <property type="entry name" value="Ankyrin_repeat_domain"/>
</dbReference>
<dbReference type="InterPro" id="IPR002110">
    <property type="entry name" value="Ankyrin_rpt"/>
</dbReference>
<dbReference type="InterPro" id="IPR036770">
    <property type="entry name" value="Ankyrin_rpt-contain_sf"/>
</dbReference>
<dbReference type="PANTHER" id="PTHR24147">
    <property type="entry name" value="ANKYRIN REPEAT DOMAIN 36-RELATED"/>
    <property type="match status" value="1"/>
</dbReference>
<dbReference type="PANTHER" id="PTHR24147:SF62">
    <property type="entry name" value="ANKYRIN REPEAT DOMAIN-CONTAINING PROTEIN 7"/>
    <property type="match status" value="1"/>
</dbReference>
<dbReference type="Pfam" id="PF12796">
    <property type="entry name" value="Ank_2"/>
    <property type="match status" value="2"/>
</dbReference>
<dbReference type="PRINTS" id="PR01415">
    <property type="entry name" value="ANKYRIN"/>
</dbReference>
<dbReference type="SMART" id="SM00248">
    <property type="entry name" value="ANK"/>
    <property type="match status" value="5"/>
</dbReference>
<dbReference type="SUPFAM" id="SSF48403">
    <property type="entry name" value="Ankyrin repeat"/>
    <property type="match status" value="1"/>
</dbReference>
<dbReference type="PROSITE" id="PS50297">
    <property type="entry name" value="ANK_REP_REGION"/>
    <property type="match status" value="1"/>
</dbReference>
<dbReference type="PROSITE" id="PS50088">
    <property type="entry name" value="ANK_REPEAT"/>
    <property type="match status" value="4"/>
</dbReference>
<accession>Q92527</accession>
<accession>B4DYF5</accession>
<accession>Q96QN1</accession>
<accession>Q9UDM3</accession>
<keyword id="KW-0025">Alternative splicing</keyword>
<keyword id="KW-0040">ANK repeat</keyword>
<keyword id="KW-1267">Proteomics identification</keyword>
<keyword id="KW-1185">Reference proteome</keyword>
<keyword id="KW-0677">Repeat</keyword>
<reference key="1">
    <citation type="journal article" date="2004" name="Nat. Genet.">
        <title>Complete sequencing and characterization of 21,243 full-length human cDNAs.</title>
        <authorList>
            <person name="Ota T."/>
            <person name="Suzuki Y."/>
            <person name="Nishikawa T."/>
            <person name="Otsuki T."/>
            <person name="Sugiyama T."/>
            <person name="Irie R."/>
            <person name="Wakamatsu A."/>
            <person name="Hayashi K."/>
            <person name="Sato H."/>
            <person name="Nagai K."/>
            <person name="Kimura K."/>
            <person name="Makita H."/>
            <person name="Sekine M."/>
            <person name="Obayashi M."/>
            <person name="Nishi T."/>
            <person name="Shibahara T."/>
            <person name="Tanaka T."/>
            <person name="Ishii S."/>
            <person name="Yamamoto J."/>
            <person name="Saito K."/>
            <person name="Kawai Y."/>
            <person name="Isono Y."/>
            <person name="Nakamura Y."/>
            <person name="Nagahari K."/>
            <person name="Murakami K."/>
            <person name="Yasuda T."/>
            <person name="Iwayanagi T."/>
            <person name="Wagatsuma M."/>
            <person name="Shiratori A."/>
            <person name="Sudo H."/>
            <person name="Hosoiri T."/>
            <person name="Kaku Y."/>
            <person name="Kodaira H."/>
            <person name="Kondo H."/>
            <person name="Sugawara M."/>
            <person name="Takahashi M."/>
            <person name="Kanda K."/>
            <person name="Yokoi T."/>
            <person name="Furuya T."/>
            <person name="Kikkawa E."/>
            <person name="Omura Y."/>
            <person name="Abe K."/>
            <person name="Kamihara K."/>
            <person name="Katsuta N."/>
            <person name="Sato K."/>
            <person name="Tanikawa M."/>
            <person name="Yamazaki M."/>
            <person name="Ninomiya K."/>
            <person name="Ishibashi T."/>
            <person name="Yamashita H."/>
            <person name="Murakawa K."/>
            <person name="Fujimori K."/>
            <person name="Tanai H."/>
            <person name="Kimata M."/>
            <person name="Watanabe M."/>
            <person name="Hiraoka S."/>
            <person name="Chiba Y."/>
            <person name="Ishida S."/>
            <person name="Ono Y."/>
            <person name="Takiguchi S."/>
            <person name="Watanabe S."/>
            <person name="Yosida M."/>
            <person name="Hotuta T."/>
            <person name="Kusano J."/>
            <person name="Kanehori K."/>
            <person name="Takahashi-Fujii A."/>
            <person name="Hara H."/>
            <person name="Tanase T.-O."/>
            <person name="Nomura Y."/>
            <person name="Togiya S."/>
            <person name="Komai F."/>
            <person name="Hara R."/>
            <person name="Takeuchi K."/>
            <person name="Arita M."/>
            <person name="Imose N."/>
            <person name="Musashino K."/>
            <person name="Yuuki H."/>
            <person name="Oshima A."/>
            <person name="Sasaki N."/>
            <person name="Aotsuka S."/>
            <person name="Yoshikawa Y."/>
            <person name="Matsunawa H."/>
            <person name="Ichihara T."/>
            <person name="Shiohata N."/>
            <person name="Sano S."/>
            <person name="Moriya S."/>
            <person name="Momiyama H."/>
            <person name="Satoh N."/>
            <person name="Takami S."/>
            <person name="Terashima Y."/>
            <person name="Suzuki O."/>
            <person name="Nakagawa S."/>
            <person name="Senoh A."/>
            <person name="Mizoguchi H."/>
            <person name="Goto Y."/>
            <person name="Shimizu F."/>
            <person name="Wakebe H."/>
            <person name="Hishigaki H."/>
            <person name="Watanabe T."/>
            <person name="Sugiyama A."/>
            <person name="Takemoto M."/>
            <person name="Kawakami B."/>
            <person name="Yamazaki M."/>
            <person name="Watanabe K."/>
            <person name="Kumagai A."/>
            <person name="Itakura S."/>
            <person name="Fukuzumi Y."/>
            <person name="Fujimori Y."/>
            <person name="Komiyama M."/>
            <person name="Tashiro H."/>
            <person name="Tanigami A."/>
            <person name="Fujiwara T."/>
            <person name="Ono T."/>
            <person name="Yamada K."/>
            <person name="Fujii Y."/>
            <person name="Ozaki K."/>
            <person name="Hirao M."/>
            <person name="Ohmori Y."/>
            <person name="Kawabata A."/>
            <person name="Hikiji T."/>
            <person name="Kobatake N."/>
            <person name="Inagaki H."/>
            <person name="Ikema Y."/>
            <person name="Okamoto S."/>
            <person name="Okitani R."/>
            <person name="Kawakami T."/>
            <person name="Noguchi S."/>
            <person name="Itoh T."/>
            <person name="Shigeta K."/>
            <person name="Senba T."/>
            <person name="Matsumura K."/>
            <person name="Nakajima Y."/>
            <person name="Mizuno T."/>
            <person name="Morinaga M."/>
            <person name="Sasaki M."/>
            <person name="Togashi T."/>
            <person name="Oyama M."/>
            <person name="Hata H."/>
            <person name="Watanabe M."/>
            <person name="Komatsu T."/>
            <person name="Mizushima-Sugano J."/>
            <person name="Satoh T."/>
            <person name="Shirai Y."/>
            <person name="Takahashi Y."/>
            <person name="Nakagawa K."/>
            <person name="Okumura K."/>
            <person name="Nagase T."/>
            <person name="Nomura N."/>
            <person name="Kikuchi H."/>
            <person name="Masuho Y."/>
            <person name="Yamashita R."/>
            <person name="Nakai K."/>
            <person name="Yada T."/>
            <person name="Nakamura Y."/>
            <person name="Ohara O."/>
            <person name="Isogai T."/>
            <person name="Sugano S."/>
        </authorList>
    </citation>
    <scope>NUCLEOTIDE SEQUENCE [LARGE SCALE MRNA] (ISOFORM 1)</scope>
    <source>
        <tissue>Testis</tissue>
    </source>
</reference>
<reference key="2">
    <citation type="journal article" date="2003" name="Nature">
        <title>The DNA sequence of human chromosome 7.</title>
        <authorList>
            <person name="Hillier L.W."/>
            <person name="Fulton R.S."/>
            <person name="Fulton L.A."/>
            <person name="Graves T.A."/>
            <person name="Pepin K.H."/>
            <person name="Wagner-McPherson C."/>
            <person name="Layman D."/>
            <person name="Maas J."/>
            <person name="Jaeger S."/>
            <person name="Walker R."/>
            <person name="Wylie K."/>
            <person name="Sekhon M."/>
            <person name="Becker M.C."/>
            <person name="O'Laughlin M.D."/>
            <person name="Schaller M.E."/>
            <person name="Fewell G.A."/>
            <person name="Delehaunty K.D."/>
            <person name="Miner T.L."/>
            <person name="Nash W.E."/>
            <person name="Cordes M."/>
            <person name="Du H."/>
            <person name="Sun H."/>
            <person name="Edwards J."/>
            <person name="Bradshaw-Cordum H."/>
            <person name="Ali J."/>
            <person name="Andrews S."/>
            <person name="Isak A."/>
            <person name="Vanbrunt A."/>
            <person name="Nguyen C."/>
            <person name="Du F."/>
            <person name="Lamar B."/>
            <person name="Courtney L."/>
            <person name="Kalicki J."/>
            <person name="Ozersky P."/>
            <person name="Bielicki L."/>
            <person name="Scott K."/>
            <person name="Holmes A."/>
            <person name="Harkins R."/>
            <person name="Harris A."/>
            <person name="Strong C.M."/>
            <person name="Hou S."/>
            <person name="Tomlinson C."/>
            <person name="Dauphin-Kohlberg S."/>
            <person name="Kozlowicz-Reilly A."/>
            <person name="Leonard S."/>
            <person name="Rohlfing T."/>
            <person name="Rock S.M."/>
            <person name="Tin-Wollam A.-M."/>
            <person name="Abbott A."/>
            <person name="Minx P."/>
            <person name="Maupin R."/>
            <person name="Strowmatt C."/>
            <person name="Latreille P."/>
            <person name="Miller N."/>
            <person name="Johnson D."/>
            <person name="Murray J."/>
            <person name="Woessner J.P."/>
            <person name="Wendl M.C."/>
            <person name="Yang S.-P."/>
            <person name="Schultz B.R."/>
            <person name="Wallis J.W."/>
            <person name="Spieth J."/>
            <person name="Bieri T.A."/>
            <person name="Nelson J.O."/>
            <person name="Berkowicz N."/>
            <person name="Wohldmann P.E."/>
            <person name="Cook L.L."/>
            <person name="Hickenbotham M.T."/>
            <person name="Eldred J."/>
            <person name="Williams D."/>
            <person name="Bedell J.A."/>
            <person name="Mardis E.R."/>
            <person name="Clifton S.W."/>
            <person name="Chissoe S.L."/>
            <person name="Marra M.A."/>
            <person name="Raymond C."/>
            <person name="Haugen E."/>
            <person name="Gillett W."/>
            <person name="Zhou Y."/>
            <person name="James R."/>
            <person name="Phelps K."/>
            <person name="Iadanoto S."/>
            <person name="Bubb K."/>
            <person name="Simms E."/>
            <person name="Levy R."/>
            <person name="Clendenning J."/>
            <person name="Kaul R."/>
            <person name="Kent W.J."/>
            <person name="Furey T.S."/>
            <person name="Baertsch R.A."/>
            <person name="Brent M.R."/>
            <person name="Keibler E."/>
            <person name="Flicek P."/>
            <person name="Bork P."/>
            <person name="Suyama M."/>
            <person name="Bailey J.A."/>
            <person name="Portnoy M.E."/>
            <person name="Torrents D."/>
            <person name="Chinwalla A.T."/>
            <person name="Gish W.R."/>
            <person name="Eddy S.R."/>
            <person name="McPherson J.D."/>
            <person name="Olson M.V."/>
            <person name="Eichler E.E."/>
            <person name="Green E.D."/>
            <person name="Waterston R.H."/>
            <person name="Wilson R.K."/>
        </authorList>
    </citation>
    <scope>NUCLEOTIDE SEQUENCE [LARGE SCALE GENOMIC DNA]</scope>
</reference>
<reference key="3">
    <citation type="journal article" date="2004" name="Genome Res.">
        <title>The status, quality, and expansion of the NIH full-length cDNA project: the Mammalian Gene Collection (MGC).</title>
        <authorList>
            <consortium name="The MGC Project Team"/>
        </authorList>
    </citation>
    <scope>NUCLEOTIDE SEQUENCE [LARGE SCALE MRNA] OF 24-254 (ISOFORM 1)</scope>
    <source>
        <tissue>Brain</tissue>
        <tissue>Testis</tissue>
    </source>
</reference>
<reference key="4">
    <citation type="journal article" date="1996" name="Genomics">
        <title>Isolation of three testis-specific genes (TSA303, TSA806, TSA903) by a differential mRNA display method.</title>
        <authorList>
            <person name="Ozaki K."/>
            <person name="Kuroki T."/>
            <person name="Hayashi S."/>
            <person name="Nakamura Y."/>
        </authorList>
    </citation>
    <scope>NUCLEOTIDE SEQUENCE [MRNA] OF 104-191 (ISOFORMS 1/2)</scope>
    <source>
        <tissue>Testis</tissue>
    </source>
</reference>